<evidence type="ECO:0000250" key="1"/>
<evidence type="ECO:0000250" key="2">
    <source>
        <dbReference type="UniProtKB" id="P38319"/>
    </source>
</evidence>
<evidence type="ECO:0000250" key="3">
    <source>
        <dbReference type="UniProtKB" id="Q9NUW8"/>
    </source>
</evidence>
<evidence type="ECO:0000269" key="4">
    <source>
    </source>
</evidence>
<evidence type="ECO:0000305" key="5"/>
<sequence>MSTLEPEKRRQHEDKSNEIIDSPIFLNKISALPESENVHCLLLKQLIGSPQLKQTWQFNFCVDLNFLLENMHASVFPTVDVRITHGYDSKSDSLARLTAQMNHCPVNVKLYSVYVPMWGTHHSKIMVNFFKDDSCQIVIHTANLVEPDWIGMSQAIFKTPLLYPKANDSLSTSSVPEYGNPSKIRKHEGSLDIKDDRNCDIIDVDSAFENFKHKSDTRSSDDLGVIGRQFQQDFLAYLKNYRHTYELIEKLKMYDFSAIRAIFIGSVPGKFEGEEESSWGLGKLKKILKMLEKDSKKDEKTKFEESDICISQCSSMGSFGPKQEYIAELTDGFGCQRGNWKFLFPTVKEVQQSMLGWQSGSSIHFNILGKTAASQVETLKKGKNLCKWVAMKAGRQRVAPHIKTYMRFSNDGELLRWVLVTSANLSKPAWGTLEGHKAKSRSTRGLRIRSYEAGVLLYPKLFEESQRAPCIMTPTYKTNTPNLDEKRREFYGKRVIGVRMCWDFPPVEYEDKDEIWSPVINRTDKDWLGYVWPPNW</sequence>
<feature type="chain" id="PRO_0000340099" description="Probable tyrosyl-DNA phosphodiesterase">
    <location>
        <begin position="1"/>
        <end position="536"/>
    </location>
</feature>
<feature type="region of interest" description="Interaction with DNA" evidence="3">
    <location>
        <begin position="315"/>
        <end position="318"/>
    </location>
</feature>
<feature type="active site" description="Nucleophile" evidence="3">
    <location>
        <position position="122"/>
    </location>
</feature>
<feature type="active site" description="Proton donor/acceptor" evidence="3">
    <location>
        <position position="401"/>
    </location>
</feature>
<feature type="binding site" evidence="3">
    <location>
        <position position="124"/>
    </location>
    <ligand>
        <name>substrate</name>
    </ligand>
</feature>
<feature type="binding site" evidence="3">
    <location>
        <position position="403"/>
    </location>
    <ligand>
        <name>substrate</name>
    </ligand>
</feature>
<feature type="site" description="Interaction with DNA" evidence="3">
    <location>
        <position position="426"/>
    </location>
</feature>
<dbReference type="EC" id="3.1.4.-" evidence="2"/>
<dbReference type="EMBL" id="CU329672">
    <property type="protein sequence ID" value="CAB58371.1"/>
    <property type="molecule type" value="Genomic_DNA"/>
</dbReference>
<dbReference type="PIR" id="T41695">
    <property type="entry name" value="T41695"/>
</dbReference>
<dbReference type="SMR" id="Q9USG9"/>
<dbReference type="BioGRID" id="276138">
    <property type="interactions" value="41"/>
</dbReference>
<dbReference type="FunCoup" id="Q9USG9">
    <property type="interactions" value="675"/>
</dbReference>
<dbReference type="STRING" id="284812.Q9USG9"/>
<dbReference type="PaxDb" id="4896-SPCP31B10.05.1"/>
<dbReference type="EnsemblFungi" id="SPCP31B10.05.1">
    <property type="protein sequence ID" value="SPCP31B10.05.1:pep"/>
    <property type="gene ID" value="SPCP31B10.05"/>
</dbReference>
<dbReference type="KEGG" id="spo:2539579"/>
<dbReference type="PomBase" id="SPCP31B10.05"/>
<dbReference type="VEuPathDB" id="FungiDB:SPCP31B10.05"/>
<dbReference type="eggNOG" id="KOG2031">
    <property type="taxonomic scope" value="Eukaryota"/>
</dbReference>
<dbReference type="HOGENOM" id="CLU_010413_2_0_1"/>
<dbReference type="InParanoid" id="Q9USG9"/>
<dbReference type="OMA" id="PLIKECW"/>
<dbReference type="PhylomeDB" id="Q9USG9"/>
<dbReference type="PRO" id="PR:Q9USG9"/>
<dbReference type="Proteomes" id="UP000002485">
    <property type="component" value="Chromosome III"/>
</dbReference>
<dbReference type="GO" id="GO:0005634">
    <property type="term" value="C:nucleus"/>
    <property type="evidence" value="ECO:0007005"/>
    <property type="project" value="PomBase"/>
</dbReference>
<dbReference type="GO" id="GO:0106334">
    <property type="term" value="F:3'-deoxyribose phosphate lyase activity"/>
    <property type="evidence" value="ECO:0000314"/>
    <property type="project" value="PomBase"/>
</dbReference>
<dbReference type="GO" id="GO:0017005">
    <property type="term" value="F:3'-tyrosyl-DNA phosphodiesterase activity"/>
    <property type="evidence" value="ECO:0000314"/>
    <property type="project" value="PomBase"/>
</dbReference>
<dbReference type="GO" id="GO:0003690">
    <property type="term" value="F:double-stranded DNA binding"/>
    <property type="evidence" value="ECO:0000318"/>
    <property type="project" value="GO_Central"/>
</dbReference>
<dbReference type="GO" id="GO:0004527">
    <property type="term" value="F:exonuclease activity"/>
    <property type="evidence" value="ECO:0007669"/>
    <property type="project" value="UniProtKB-KW"/>
</dbReference>
<dbReference type="GO" id="GO:0003697">
    <property type="term" value="F:single-stranded DNA binding"/>
    <property type="evidence" value="ECO:0000318"/>
    <property type="project" value="GO_Central"/>
</dbReference>
<dbReference type="GO" id="GO:0006284">
    <property type="term" value="P:base-excision repair"/>
    <property type="evidence" value="ECO:0000315"/>
    <property type="project" value="PomBase"/>
</dbReference>
<dbReference type="GO" id="GO:0006281">
    <property type="term" value="P:DNA repair"/>
    <property type="evidence" value="ECO:0000318"/>
    <property type="project" value="GO_Central"/>
</dbReference>
<dbReference type="GO" id="GO:0006265">
    <property type="term" value="P:DNA topological change"/>
    <property type="evidence" value="ECO:0000315"/>
    <property type="project" value="PomBase"/>
</dbReference>
<dbReference type="CDD" id="cd09194">
    <property type="entry name" value="PLDc_yTdp1_1"/>
    <property type="match status" value="1"/>
</dbReference>
<dbReference type="Gene3D" id="3.30.870.10">
    <property type="entry name" value="Endonuclease Chain A"/>
    <property type="match status" value="2"/>
</dbReference>
<dbReference type="InterPro" id="IPR010347">
    <property type="entry name" value="Tdp1"/>
</dbReference>
<dbReference type="PANTHER" id="PTHR12415">
    <property type="entry name" value="TYROSYL-DNA PHOSPHODIESTERASE 1"/>
    <property type="match status" value="1"/>
</dbReference>
<dbReference type="PANTHER" id="PTHR12415:SF0">
    <property type="entry name" value="TYROSYL-DNA PHOSPHODIESTERASE 1"/>
    <property type="match status" value="1"/>
</dbReference>
<dbReference type="Pfam" id="PF06087">
    <property type="entry name" value="Tyr-DNA_phospho"/>
    <property type="match status" value="1"/>
</dbReference>
<dbReference type="SUPFAM" id="SSF56024">
    <property type="entry name" value="Phospholipase D/nuclease"/>
    <property type="match status" value="2"/>
</dbReference>
<gene>
    <name type="ORF">SPCP31B10.05</name>
</gene>
<name>TYDP1_SCHPO</name>
<keyword id="KW-0227">DNA damage</keyword>
<keyword id="KW-0234">DNA repair</keyword>
<keyword id="KW-0269">Exonuclease</keyword>
<keyword id="KW-0378">Hydrolase</keyword>
<keyword id="KW-0540">Nuclease</keyword>
<keyword id="KW-0539">Nucleus</keyword>
<keyword id="KW-1185">Reference proteome</keyword>
<keyword id="KW-0677">Repeat</keyword>
<organism>
    <name type="scientific">Schizosaccharomyces pombe (strain 972 / ATCC 24843)</name>
    <name type="common">Fission yeast</name>
    <dbReference type="NCBI Taxonomy" id="284812"/>
    <lineage>
        <taxon>Eukaryota</taxon>
        <taxon>Fungi</taxon>
        <taxon>Dikarya</taxon>
        <taxon>Ascomycota</taxon>
        <taxon>Taphrinomycotina</taxon>
        <taxon>Schizosaccharomycetes</taxon>
        <taxon>Schizosaccharomycetales</taxon>
        <taxon>Schizosaccharomycetaceae</taxon>
        <taxon>Schizosaccharomyces</taxon>
    </lineage>
</organism>
<protein>
    <recommendedName>
        <fullName>Probable tyrosyl-DNA phosphodiesterase</fullName>
        <shortName>Tyr-DNA phosphodiesterase</shortName>
        <ecNumber evidence="2">3.1.4.-</ecNumber>
    </recommendedName>
</protein>
<accession>Q9USG9</accession>
<reference key="1">
    <citation type="journal article" date="2002" name="Nature">
        <title>The genome sequence of Schizosaccharomyces pombe.</title>
        <authorList>
            <person name="Wood V."/>
            <person name="Gwilliam R."/>
            <person name="Rajandream M.A."/>
            <person name="Lyne M.H."/>
            <person name="Lyne R."/>
            <person name="Stewart A."/>
            <person name="Sgouros J.G."/>
            <person name="Peat N."/>
            <person name="Hayles J."/>
            <person name="Baker S.G."/>
            <person name="Basham D."/>
            <person name="Bowman S."/>
            <person name="Brooks K."/>
            <person name="Brown D."/>
            <person name="Brown S."/>
            <person name="Chillingworth T."/>
            <person name="Churcher C.M."/>
            <person name="Collins M."/>
            <person name="Connor R."/>
            <person name="Cronin A."/>
            <person name="Davis P."/>
            <person name="Feltwell T."/>
            <person name="Fraser A."/>
            <person name="Gentles S."/>
            <person name="Goble A."/>
            <person name="Hamlin N."/>
            <person name="Harris D.E."/>
            <person name="Hidalgo J."/>
            <person name="Hodgson G."/>
            <person name="Holroyd S."/>
            <person name="Hornsby T."/>
            <person name="Howarth S."/>
            <person name="Huckle E.J."/>
            <person name="Hunt S."/>
            <person name="Jagels K."/>
            <person name="James K.D."/>
            <person name="Jones L."/>
            <person name="Jones M."/>
            <person name="Leather S."/>
            <person name="McDonald S."/>
            <person name="McLean J."/>
            <person name="Mooney P."/>
            <person name="Moule S."/>
            <person name="Mungall K.L."/>
            <person name="Murphy L.D."/>
            <person name="Niblett D."/>
            <person name="Odell C."/>
            <person name="Oliver K."/>
            <person name="O'Neil S."/>
            <person name="Pearson D."/>
            <person name="Quail M.A."/>
            <person name="Rabbinowitsch E."/>
            <person name="Rutherford K.M."/>
            <person name="Rutter S."/>
            <person name="Saunders D."/>
            <person name="Seeger K."/>
            <person name="Sharp S."/>
            <person name="Skelton J."/>
            <person name="Simmonds M.N."/>
            <person name="Squares R."/>
            <person name="Squares S."/>
            <person name="Stevens K."/>
            <person name="Taylor K."/>
            <person name="Taylor R.G."/>
            <person name="Tivey A."/>
            <person name="Walsh S.V."/>
            <person name="Warren T."/>
            <person name="Whitehead S."/>
            <person name="Woodward J.R."/>
            <person name="Volckaert G."/>
            <person name="Aert R."/>
            <person name="Robben J."/>
            <person name="Grymonprez B."/>
            <person name="Weltjens I."/>
            <person name="Vanstreels E."/>
            <person name="Rieger M."/>
            <person name="Schaefer M."/>
            <person name="Mueller-Auer S."/>
            <person name="Gabel C."/>
            <person name="Fuchs M."/>
            <person name="Duesterhoeft A."/>
            <person name="Fritzc C."/>
            <person name="Holzer E."/>
            <person name="Moestl D."/>
            <person name="Hilbert H."/>
            <person name="Borzym K."/>
            <person name="Langer I."/>
            <person name="Beck A."/>
            <person name="Lehrach H."/>
            <person name="Reinhardt R."/>
            <person name="Pohl T.M."/>
            <person name="Eger P."/>
            <person name="Zimmermann W."/>
            <person name="Wedler H."/>
            <person name="Wambutt R."/>
            <person name="Purnelle B."/>
            <person name="Goffeau A."/>
            <person name="Cadieu E."/>
            <person name="Dreano S."/>
            <person name="Gloux S."/>
            <person name="Lelaure V."/>
            <person name="Mottier S."/>
            <person name="Galibert F."/>
            <person name="Aves S.J."/>
            <person name="Xiang Z."/>
            <person name="Hunt C."/>
            <person name="Moore K."/>
            <person name="Hurst S.M."/>
            <person name="Lucas M."/>
            <person name="Rochet M."/>
            <person name="Gaillardin C."/>
            <person name="Tallada V.A."/>
            <person name="Garzon A."/>
            <person name="Thode G."/>
            <person name="Daga R.R."/>
            <person name="Cruzado L."/>
            <person name="Jimenez J."/>
            <person name="Sanchez M."/>
            <person name="del Rey F."/>
            <person name="Benito J."/>
            <person name="Dominguez A."/>
            <person name="Revuelta J.L."/>
            <person name="Moreno S."/>
            <person name="Armstrong J."/>
            <person name="Forsburg S.L."/>
            <person name="Cerutti L."/>
            <person name="Lowe T."/>
            <person name="McCombie W.R."/>
            <person name="Paulsen I."/>
            <person name="Potashkin J."/>
            <person name="Shpakovski G.V."/>
            <person name="Ussery D."/>
            <person name="Barrell B.G."/>
            <person name="Nurse P."/>
        </authorList>
    </citation>
    <scope>NUCLEOTIDE SEQUENCE [LARGE SCALE GENOMIC DNA]</scope>
    <source>
        <strain>972 / ATCC 24843</strain>
    </source>
</reference>
<reference key="2">
    <citation type="journal article" date="2006" name="Nat. Biotechnol.">
        <title>ORFeome cloning and global analysis of protein localization in the fission yeast Schizosaccharomyces pombe.</title>
        <authorList>
            <person name="Matsuyama A."/>
            <person name="Arai R."/>
            <person name="Yashiroda Y."/>
            <person name="Shirai A."/>
            <person name="Kamata A."/>
            <person name="Sekido S."/>
            <person name="Kobayashi Y."/>
            <person name="Hashimoto A."/>
            <person name="Hamamoto M."/>
            <person name="Hiraoka Y."/>
            <person name="Horinouchi S."/>
            <person name="Yoshida M."/>
        </authorList>
    </citation>
    <scope>SUBCELLULAR LOCATION [LARGE SCALE ANALYSIS]</scope>
</reference>
<comment type="function">
    <text evidence="1 2">DNA repair enzyme that can remove a variety of covalent adducts from DNA through hydrolysis of a 3'-phosphodiester bond, giving rise to DNA with a free 3' phosphate. Catalyzes the hydrolysis of dead-end complexes between DNA and the topoisomerase I active site tyrosine residue. Hydrolyzes 3'-phosphoglycolates on protruding 3' ends on DNA double-strand breaks due to DNA damage by radiation and free radicals. Acts on blunt-ended double-strand DNA breaks and on single-stranded DNA. May have low 3'exonuclease activity and may be able to remove a single nucleoside from the 3'end of DNA and RNA molecules with 3'hydroxyl groups. Has no exonuclease activity towards DNA or RNA with a 3'phosphate (By similarity).</text>
</comment>
<comment type="subcellular location">
    <subcellularLocation>
        <location evidence="4">Nucleus</location>
    </subcellularLocation>
</comment>
<comment type="similarity">
    <text evidence="5">Belongs to the tyrosyl-DNA phosphodiesterase family.</text>
</comment>
<proteinExistence type="inferred from homology"/>